<evidence type="ECO:0000250" key="1">
    <source>
        <dbReference type="UniProtKB" id="Q289M7"/>
    </source>
</evidence>
<evidence type="ECO:0000255" key="2">
    <source>
        <dbReference type="HAMAP-Rule" id="MF_04072"/>
    </source>
</evidence>
<evidence type="ECO:0000305" key="3"/>
<evidence type="ECO:0007829" key="4">
    <source>
        <dbReference type="PDB" id="2WRH"/>
    </source>
</evidence>
<evidence type="ECO:0007829" key="5">
    <source>
        <dbReference type="PDB" id="6HJN"/>
    </source>
</evidence>
<evidence type="ECO:0007829" key="6">
    <source>
        <dbReference type="PDB" id="6HJP"/>
    </source>
</evidence>
<keyword id="KW-0002">3D-structure</keyword>
<keyword id="KW-1167">Clathrin- and caveolin-independent endocytosis of virus by host</keyword>
<keyword id="KW-1165">Clathrin-mediated endocytosis of virus by host</keyword>
<keyword id="KW-1015">Disulfide bond</keyword>
<keyword id="KW-1170">Fusion of virus membrane with host endosomal membrane</keyword>
<keyword id="KW-1168">Fusion of virus membrane with host membrane</keyword>
<keyword id="KW-0325">Glycoprotein</keyword>
<keyword id="KW-0348">Hemagglutinin</keyword>
<keyword id="KW-1032">Host cell membrane</keyword>
<keyword id="KW-1043">Host membrane</keyword>
<keyword id="KW-0945">Host-virus interaction</keyword>
<keyword id="KW-0449">Lipoprotein</keyword>
<keyword id="KW-0472">Membrane</keyword>
<keyword id="KW-0564">Palmitate</keyword>
<keyword id="KW-0732">Signal</keyword>
<keyword id="KW-0812">Transmembrane</keyword>
<keyword id="KW-1133">Transmembrane helix</keyword>
<keyword id="KW-1161">Viral attachment to host cell</keyword>
<keyword id="KW-0261">Viral envelope protein</keyword>
<keyword id="KW-1162">Viral penetration into host cytoplasm</keyword>
<keyword id="KW-0946">Virion</keyword>
<keyword id="KW-1164">Virus endocytosis by host</keyword>
<keyword id="KW-1160">Virus entry into host cell</keyword>
<comment type="function">
    <text>Binds to sialic acid-containing receptors on the cell surface, bringing about the attachment of the virus particle to the cell. This attachment induces virion internalization of about two third of the virus particles through clathrin-dependent endocytosis and about one third through a clathrin- and caveolin-independent pathway. Plays a major role in the determination of host range restriction and virulence. Class I viral fusion protein. Responsible for penetration of the virus into the cell cytoplasm by mediating the fusion of the membrane of the endocytosed virus particle with the endosomal membrane. Low pH in endosomes induces an irreversible conformational change in HA2, releasing the fusion hydrophobic peptide. Several trimers are required to form a competent fusion pore.</text>
</comment>
<comment type="function">
    <text evidence="2">Binds to sialic acid-containing receptors on the cell surface, bringing about the attachment of the virus particle to the cell. This attachment induces virion internalization either through clathrin-dependent endocytosis or through clathrin- and caveolin-independent pathway. Plays a major role in the determination of host range restriction and virulence. Class I viral fusion protein. Responsible for penetration of the virus into the cell cytoplasm by mediating the fusion of the membrane of the endocytosed virus particle with the endosomal membrane. Low pH in endosomes induces an irreversible conformational change in HA2, releasing the fusion hydrophobic peptide. Several trimers are required to form a competent fusion pore.</text>
</comment>
<comment type="subunit">
    <text evidence="1">Homotrimer of disulfide-linked HA1-HA2. Interacts with human CACNA1C.</text>
</comment>
<comment type="subcellular location">
    <subcellularLocation>
        <location evidence="2">Virion membrane</location>
        <topology evidence="2">Single-pass type I membrane protein</topology>
    </subcellularLocation>
    <subcellularLocation>
        <location evidence="2">Host apical cell membrane</location>
        <topology evidence="2">Single-pass type I membrane protein</topology>
    </subcellularLocation>
    <text evidence="2">Targeted to the apical plasma membrane in epithelial polarized cells through a signal present in the transmembrane domain. Associated with glycosphingolipid- and cholesterol-enriched detergent-resistant lipid rafts.</text>
</comment>
<comment type="PTM">
    <text evidence="2">Palmitoylated.</text>
</comment>
<comment type="PTM">
    <text evidence="2">In natural infection, inactive HA is matured into HA1 and HA2 outside the cell by one or more trypsin-like, arginine-specific endoprotease secreted by the bronchial epithelial cells. One identified protease that may be involved in this process is secreted in lungs by club cells.</text>
</comment>
<comment type="miscellaneous">
    <text>Major glycoprotein, comprises over 80% of the envelope proteins present in virus particle.</text>
</comment>
<comment type="miscellaneous">
    <text>The extent of infection into host organism is determined by HA. Influenza viruses bud from the apical surface of polarized epithelial cells (e.g. bronchial epithelial cells) into lumen of lungs and are therefore usually pneumotropic. The reason is that HA is cleaved by tryptase clara which is restricted to lungs. However, HAs of H5 and H7 pantropic avian viruses subtypes can be cleaved by furin and subtilisin-type enzymes, allowing the virus to grow in other organs than lungs.</text>
</comment>
<comment type="miscellaneous">
    <text evidence="3">The influenza A genome consist of 8 RNA segments. Genetic variation of hemagglutinin and/or neuraminidase genes results in the emergence of new influenza strains. The mechanism of variation can be the result of point mutations or the result of genetic reassortment between segments of two different strains.</text>
</comment>
<comment type="similarity">
    <text evidence="2">Belongs to the influenza viruses hemagglutinin family.</text>
</comment>
<proteinExistence type="evidence at protein level"/>
<organism>
    <name type="scientific">Influenza A virus (strain A/Duck/Alberta/35/1976 H1N1)</name>
    <dbReference type="NCBI Taxonomy" id="352520"/>
    <lineage>
        <taxon>Viruses</taxon>
        <taxon>Riboviria</taxon>
        <taxon>Orthornavirae</taxon>
        <taxon>Negarnaviricota</taxon>
        <taxon>Polyploviricotina</taxon>
        <taxon>Insthoviricetes</taxon>
        <taxon>Articulavirales</taxon>
        <taxon>Orthomyxoviridae</taxon>
        <taxon>Alphainfluenzavirus</taxon>
        <taxon>Alphainfluenzavirus influenzae</taxon>
        <taxon>Influenza A virus</taxon>
    </lineage>
</organism>
<accession>P26562</accession>
<accession>O09652</accession>
<protein>
    <recommendedName>
        <fullName evidence="2">Hemagglutinin</fullName>
    </recommendedName>
    <component>
        <recommendedName>
            <fullName evidence="2">Hemagglutinin HA1 chain</fullName>
        </recommendedName>
    </component>
    <component>
        <recommendedName>
            <fullName evidence="2">Hemagglutinin HA2 chain</fullName>
        </recommendedName>
    </component>
</protein>
<dbReference type="EMBL" id="D10477">
    <property type="protein sequence ID" value="BAA01280.1"/>
    <property type="molecule type" value="Genomic_RNA"/>
</dbReference>
<dbReference type="EMBL" id="U47310">
    <property type="protein sequence ID" value="AAB52910.1"/>
    <property type="molecule type" value="mRNA"/>
</dbReference>
<dbReference type="PIR" id="A36257">
    <property type="entry name" value="HMIVD1"/>
</dbReference>
<dbReference type="PDB" id="2WRH">
    <property type="method" value="X-ray"/>
    <property type="resolution" value="3.00 A"/>
    <property type="chains" value="H/J/L=18-343, I/K/M=345-566"/>
</dbReference>
<dbReference type="PDB" id="6HJN">
    <property type="method" value="EM"/>
    <property type="resolution" value="3.30 A"/>
    <property type="chains" value="B/D/F=345-517"/>
</dbReference>
<dbReference type="PDB" id="6HJP">
    <property type="method" value="EM"/>
    <property type="resolution" value="3.30 A"/>
    <property type="chains" value="B/D/F=345-518"/>
</dbReference>
<dbReference type="PDB" id="6HJR">
    <property type="method" value="EM"/>
    <property type="resolution" value="4.20 A"/>
    <property type="chains" value="B/D/F=345-547"/>
</dbReference>
<dbReference type="PDBsum" id="2WRH"/>
<dbReference type="PDBsum" id="6HJN"/>
<dbReference type="PDBsum" id="6HJP"/>
<dbReference type="PDBsum" id="6HJR"/>
<dbReference type="EMDB" id="EMD-0234"/>
<dbReference type="EMDB" id="EMD-0235"/>
<dbReference type="EMDB" id="EMD-0237"/>
<dbReference type="SMR" id="P26562"/>
<dbReference type="GlyCosmos" id="P26562">
    <property type="glycosylation" value="6 sites, No reported glycans"/>
</dbReference>
<dbReference type="EvolutionaryTrace" id="P26562"/>
<dbReference type="GO" id="GO:0020002">
    <property type="term" value="C:host cell plasma membrane"/>
    <property type="evidence" value="ECO:0007669"/>
    <property type="project" value="UniProtKB-SubCell"/>
</dbReference>
<dbReference type="GO" id="GO:0016020">
    <property type="term" value="C:membrane"/>
    <property type="evidence" value="ECO:0007669"/>
    <property type="project" value="UniProtKB-UniRule"/>
</dbReference>
<dbReference type="GO" id="GO:0019031">
    <property type="term" value="C:viral envelope"/>
    <property type="evidence" value="ECO:0007669"/>
    <property type="project" value="UniProtKB-UniRule"/>
</dbReference>
<dbReference type="GO" id="GO:0055036">
    <property type="term" value="C:virion membrane"/>
    <property type="evidence" value="ECO:0007669"/>
    <property type="project" value="UniProtKB-SubCell"/>
</dbReference>
<dbReference type="GO" id="GO:0046789">
    <property type="term" value="F:host cell surface receptor binding"/>
    <property type="evidence" value="ECO:0007669"/>
    <property type="project" value="UniProtKB-UniRule"/>
</dbReference>
<dbReference type="GO" id="GO:0075512">
    <property type="term" value="P:clathrin-dependent endocytosis of virus by host cell"/>
    <property type="evidence" value="ECO:0007669"/>
    <property type="project" value="UniProtKB-UniRule"/>
</dbReference>
<dbReference type="GO" id="GO:0039654">
    <property type="term" value="P:fusion of virus membrane with host endosome membrane"/>
    <property type="evidence" value="ECO:0007669"/>
    <property type="project" value="UniProtKB-UniRule"/>
</dbReference>
<dbReference type="GO" id="GO:0019064">
    <property type="term" value="P:fusion of virus membrane with host plasma membrane"/>
    <property type="evidence" value="ECO:0007669"/>
    <property type="project" value="InterPro"/>
</dbReference>
<dbReference type="GO" id="GO:0046761">
    <property type="term" value="P:viral budding from plasma membrane"/>
    <property type="evidence" value="ECO:0007669"/>
    <property type="project" value="UniProtKB-UniRule"/>
</dbReference>
<dbReference type="GO" id="GO:0019062">
    <property type="term" value="P:virion attachment to host cell"/>
    <property type="evidence" value="ECO:0007669"/>
    <property type="project" value="UniProtKB-KW"/>
</dbReference>
<dbReference type="FunFam" id="3.90.20.10:FF:000002">
    <property type="entry name" value="Hemagglutinin"/>
    <property type="match status" value="1"/>
</dbReference>
<dbReference type="Gene3D" id="3.90.20.10">
    <property type="match status" value="1"/>
</dbReference>
<dbReference type="Gene3D" id="3.90.209.20">
    <property type="match status" value="1"/>
</dbReference>
<dbReference type="Gene3D" id="2.10.77.10">
    <property type="entry name" value="Hemagglutinin Chain A, Domain 2"/>
    <property type="match status" value="1"/>
</dbReference>
<dbReference type="HAMAP" id="MF_04072">
    <property type="entry name" value="INFV_HEMA"/>
    <property type="match status" value="1"/>
</dbReference>
<dbReference type="InterPro" id="IPR008980">
    <property type="entry name" value="Capsid_hemagglutn"/>
</dbReference>
<dbReference type="InterPro" id="IPR013828">
    <property type="entry name" value="Hemagglutn_HA1_a/b_dom_sf"/>
</dbReference>
<dbReference type="InterPro" id="IPR000149">
    <property type="entry name" value="Hemagglutn_influenz_A"/>
</dbReference>
<dbReference type="InterPro" id="IPR001364">
    <property type="entry name" value="Hemagglutn_influenz_A/B"/>
</dbReference>
<dbReference type="Pfam" id="PF00509">
    <property type="entry name" value="Hemagglutinin"/>
    <property type="match status" value="1"/>
</dbReference>
<dbReference type="PRINTS" id="PR00330">
    <property type="entry name" value="HEMAGGLUTN1"/>
</dbReference>
<dbReference type="PRINTS" id="PR00329">
    <property type="entry name" value="HEMAGGLUTN12"/>
</dbReference>
<dbReference type="SUPFAM" id="SSF58064">
    <property type="entry name" value="Influenza hemagglutinin (stalk)"/>
    <property type="match status" value="1"/>
</dbReference>
<dbReference type="SUPFAM" id="SSF49818">
    <property type="entry name" value="Viral protein domain"/>
    <property type="match status" value="1"/>
</dbReference>
<reference key="1">
    <citation type="journal article" date="1990" name="J. Gen. Virol.">
        <title>Molecular analysis of the haemagglutinin gene of an avian H1N1 influenza virus.</title>
        <authorList>
            <person name="Austin F.J."/>
            <person name="Kawaoka Y."/>
            <person name="Webster R.G."/>
        </authorList>
    </citation>
    <scope>NUCLEOTIDE SEQUENCE [GENOMIC RNA]</scope>
</reference>
<reference key="2">
    <citation type="journal article" date="1996" name="J. Virol.">
        <title>Emergence of avian H1N1 influenza viruses in pigs in China.</title>
        <authorList>
            <person name="Guan Y."/>
            <person name="Shortridge K.F."/>
            <person name="Krauss S."/>
            <person name="Li P.H."/>
            <person name="Kawaoka Y."/>
            <person name="Webster R.G."/>
        </authorList>
    </citation>
    <scope>NUCLEOTIDE SEQUENCE [MRNA] OF 18-344</scope>
</reference>
<sequence length="566" mass="63072">MEAKLFVLFCTFTVLKADTICVGYHANNSTDTVDTVLEKNVTVTHSVNLLEDSHNGKLCSLNGIAPLQLGKCNVAGWLLGNPECDLLLTANSWSYIIETSNSENGTCYPGEFIDYEELREQLSSISSFEKFEIFPKASSWPNHETTKGVTAACSYSGASSFYRNLLWITKKGTSYPKLSKSYTNNKGKEVLVLWGVHHPPSVSEQQSLYQNADAYVSVGSSKYNRRFAPEIAARPEVRGQAGRMNYYWTLLDQGDTITFEATGNLIAPWYAFALNKGSDSGIITSDAPVHNCDTRCQTPHGALNSSLPFQNVHPITIGECPKYVKSTKLRMATGLRNVPSIQSRGLFGAIAGFIEGGWTGMIDGWYGYHHQNEQGSGYAADQKSTQNAIDGITSKVNSVIEKMNTQFTAVGKEFNNLERRIENLNKKVDDGFLDVWTYNAELLVLLENERTLDFHDSNVRNLYEKVKSQLRNNAKEIGNGCFEFYHKCDDECMESVKNGTYDYPKYSEESKLNREEIDGVKLESMGVYQILAIYSTVASSLVLLVSWGAISFWMCSNGSLQCRICI</sequence>
<feature type="signal peptide" evidence="2">
    <location>
        <begin position="1"/>
        <end position="17"/>
    </location>
</feature>
<feature type="chain" id="PRO_0000440451" description="Hemagglutinin" evidence="2">
    <location>
        <begin position="18"/>
        <end position="566"/>
    </location>
</feature>
<feature type="chain" id="PRO_0000038910" description="Hemagglutinin HA1 chain" evidence="2">
    <location>
        <begin position="18"/>
        <end position="343"/>
    </location>
</feature>
<feature type="chain" id="PRO_0000038911" description="Hemagglutinin HA2 chain" evidence="2">
    <location>
        <begin position="345"/>
        <end position="566"/>
    </location>
</feature>
<feature type="topological domain" description="Extracellular" evidence="2">
    <location>
        <begin position="18"/>
        <end position="529"/>
    </location>
</feature>
<feature type="transmembrane region" description="Helical" evidence="2">
    <location>
        <begin position="530"/>
        <end position="550"/>
    </location>
</feature>
<feature type="topological domain" description="Cytoplasmic" evidence="2">
    <location>
        <begin position="551"/>
        <end position="566"/>
    </location>
</feature>
<feature type="site" description="Cleavage; by host" evidence="2">
    <location>
        <begin position="344"/>
        <end position="345"/>
    </location>
</feature>
<feature type="lipid moiety-binding region" description="S-palmitoyl cysteine; by host" evidence="2">
    <location>
        <position position="555"/>
    </location>
</feature>
<feature type="lipid moiety-binding region" description="S-palmitoyl cysteine; by host" evidence="2">
    <location>
        <position position="562"/>
    </location>
</feature>
<feature type="lipid moiety-binding region" description="S-palmitoyl cysteine; by host" evidence="2">
    <location>
        <position position="565"/>
    </location>
</feature>
<feature type="glycosylation site" description="N-linked (GlcNAc...) asparagine; by host" evidence="2">
    <location>
        <position position="27"/>
    </location>
</feature>
<feature type="glycosylation site" description="N-linked (GlcNAc...) asparagine; by host" evidence="2">
    <location>
        <position position="28"/>
    </location>
</feature>
<feature type="glycosylation site" description="N-linked (GlcNAc...) asparagine; by host" evidence="2">
    <location>
        <position position="40"/>
    </location>
</feature>
<feature type="glycosylation site" description="N-linked (GlcNAc...) asparagine; by host" evidence="2">
    <location>
        <position position="104"/>
    </location>
</feature>
<feature type="glycosylation site" description="N-linked (GlcNAc...) asparagine; by host" evidence="2">
    <location>
        <position position="304"/>
    </location>
</feature>
<feature type="glycosylation site" description="N-linked (GlcNAc...) asparagine; by host" evidence="2">
    <location>
        <position position="498"/>
    </location>
</feature>
<feature type="disulfide bond" description="Interchain (between HA1 and HA2 chains)" evidence="2">
    <location>
        <begin position="21"/>
        <end position="481"/>
    </location>
</feature>
<feature type="disulfide bond" evidence="2">
    <location>
        <begin position="59"/>
        <end position="292"/>
    </location>
</feature>
<feature type="disulfide bond" evidence="2">
    <location>
        <begin position="72"/>
        <end position="84"/>
    </location>
</feature>
<feature type="disulfide bond" evidence="2">
    <location>
        <begin position="107"/>
        <end position="153"/>
    </location>
</feature>
<feature type="disulfide bond" evidence="2">
    <location>
        <begin position="296"/>
        <end position="320"/>
    </location>
</feature>
<feature type="disulfide bond" evidence="2">
    <location>
        <begin position="488"/>
        <end position="492"/>
    </location>
</feature>
<feature type="sequence conflict" description="In Ref. 2; AAB52910." evidence="3" ref="2">
    <original>A</original>
    <variation>P</variation>
    <location>
        <position position="65"/>
    </location>
</feature>
<feature type="sequence conflict" description="In Ref. 2; AAB52910." evidence="3" ref="2">
    <original>I</original>
    <variation>V</variation>
    <location>
        <position position="125"/>
    </location>
</feature>
<feature type="sequence conflict" description="In Ref. 2; AAB52910." evidence="3" ref="2">
    <original>E</original>
    <variation>K</variation>
    <location>
        <position position="236"/>
    </location>
</feature>
<feature type="strand" evidence="4">
    <location>
        <begin position="19"/>
        <end position="25"/>
    </location>
</feature>
<feature type="strand" evidence="4">
    <location>
        <begin position="39"/>
        <end position="44"/>
    </location>
</feature>
<feature type="strand" evidence="4">
    <location>
        <begin position="46"/>
        <end position="48"/>
    </location>
</feature>
<feature type="strand" evidence="4">
    <location>
        <begin position="56"/>
        <end position="61"/>
    </location>
</feature>
<feature type="strand" evidence="6">
    <location>
        <begin position="67"/>
        <end position="70"/>
    </location>
</feature>
<feature type="helix" evidence="4">
    <location>
        <begin position="74"/>
        <end position="79"/>
    </location>
</feature>
<feature type="helix" evidence="4">
    <location>
        <begin position="82"/>
        <end position="84"/>
    </location>
</feature>
<feature type="turn" evidence="4">
    <location>
        <begin position="85"/>
        <end position="87"/>
    </location>
</feature>
<feature type="strand" evidence="4">
    <location>
        <begin position="96"/>
        <end position="98"/>
    </location>
</feature>
<feature type="strand" evidence="5">
    <location>
        <begin position="107"/>
        <end position="112"/>
    </location>
</feature>
<feature type="helix" evidence="4">
    <location>
        <begin position="115"/>
        <end position="121"/>
    </location>
</feature>
<feature type="strand" evidence="4">
    <location>
        <begin position="123"/>
        <end position="134"/>
    </location>
</feature>
<feature type="helix" evidence="4">
    <location>
        <begin position="136"/>
        <end position="139"/>
    </location>
</feature>
<feature type="strand" evidence="5">
    <location>
        <begin position="141"/>
        <end position="147"/>
    </location>
</feature>
<feature type="strand" evidence="4">
    <location>
        <begin position="150"/>
        <end position="155"/>
    </location>
</feature>
<feature type="strand" evidence="4">
    <location>
        <begin position="158"/>
        <end position="160"/>
    </location>
</feature>
<feature type="strand" evidence="4">
    <location>
        <begin position="163"/>
        <end position="167"/>
    </location>
</feature>
<feature type="strand" evidence="4">
    <location>
        <begin position="170"/>
        <end position="173"/>
    </location>
</feature>
<feature type="strand" evidence="4">
    <location>
        <begin position="178"/>
        <end position="183"/>
    </location>
</feature>
<feature type="strand" evidence="4">
    <location>
        <begin position="186"/>
        <end position="198"/>
    </location>
</feature>
<feature type="helix" evidence="4">
    <location>
        <begin position="202"/>
        <end position="209"/>
    </location>
</feature>
<feature type="strand" evidence="4">
    <location>
        <begin position="216"/>
        <end position="220"/>
    </location>
</feature>
<feature type="strand" evidence="4">
    <location>
        <begin position="223"/>
        <end position="227"/>
    </location>
</feature>
<feature type="strand" evidence="4">
    <location>
        <begin position="242"/>
        <end position="251"/>
    </location>
</feature>
<feature type="strand" evidence="4">
    <location>
        <begin position="256"/>
        <end position="263"/>
    </location>
</feature>
<feature type="strand" evidence="4">
    <location>
        <begin position="265"/>
        <end position="276"/>
    </location>
</feature>
<feature type="strand" evidence="4">
    <location>
        <begin position="282"/>
        <end position="284"/>
    </location>
</feature>
<feature type="strand" evidence="4">
    <location>
        <begin position="289"/>
        <end position="293"/>
    </location>
</feature>
<feature type="strand" evidence="4">
    <location>
        <begin position="295"/>
        <end position="297"/>
    </location>
</feature>
<feature type="strand" evidence="4">
    <location>
        <begin position="307"/>
        <end position="310"/>
    </location>
</feature>
<feature type="strand" evidence="4">
    <location>
        <begin position="317"/>
        <end position="319"/>
    </location>
</feature>
<feature type="strand" evidence="4">
    <location>
        <begin position="330"/>
        <end position="332"/>
    </location>
</feature>
<feature type="turn" evidence="4">
    <location>
        <begin position="351"/>
        <end position="353"/>
    </location>
</feature>
<feature type="strand" evidence="5">
    <location>
        <begin position="358"/>
        <end position="360"/>
    </location>
</feature>
<feature type="strand" evidence="4">
    <location>
        <begin position="365"/>
        <end position="368"/>
    </location>
</feature>
<feature type="strand" evidence="5">
    <location>
        <begin position="372"/>
        <end position="374"/>
    </location>
</feature>
<feature type="helix" evidence="4">
    <location>
        <begin position="382"/>
        <end position="401"/>
    </location>
</feature>
<feature type="helix" evidence="4">
    <location>
        <begin position="419"/>
        <end position="470"/>
    </location>
</feature>
<feature type="helix" evidence="4">
    <location>
        <begin position="471"/>
        <end position="473"/>
    </location>
</feature>
<feature type="strand" evidence="4">
    <location>
        <begin position="474"/>
        <end position="478"/>
    </location>
</feature>
<feature type="strand" evidence="4">
    <location>
        <begin position="481"/>
        <end position="486"/>
    </location>
</feature>
<feature type="helix" evidence="4">
    <location>
        <begin position="490"/>
        <end position="498"/>
    </location>
</feature>
<feature type="helix" evidence="5">
    <location>
        <begin position="503"/>
        <end position="505"/>
    </location>
</feature>
<feature type="helix" evidence="5">
    <location>
        <begin position="507"/>
        <end position="516"/>
    </location>
</feature>
<name>HEMA_I76A4</name>
<gene>
    <name evidence="2" type="primary">HA</name>
</gene>
<organismHost>
    <name type="scientific">Aves</name>
    <dbReference type="NCBI Taxonomy" id="8782"/>
</organismHost>
<organismHost>
    <name type="scientific">Homo sapiens</name>
    <name type="common">Human</name>
    <dbReference type="NCBI Taxonomy" id="9606"/>
</organismHost>
<organismHost>
    <name type="scientific">Sus scrofa</name>
    <name type="common">Pig</name>
    <dbReference type="NCBI Taxonomy" id="9823"/>
</organismHost>